<name>Y4233_RHIE6</name>
<dbReference type="EMBL" id="CP001074">
    <property type="protein sequence ID" value="ACE93162.1"/>
    <property type="molecule type" value="Genomic_DNA"/>
</dbReference>
<dbReference type="KEGG" id="rec:RHECIAT_CH0004233"/>
<dbReference type="eggNOG" id="ENOG502ZZUX">
    <property type="taxonomic scope" value="Bacteria"/>
</dbReference>
<dbReference type="HOGENOM" id="CLU_1395337_0_0_5"/>
<dbReference type="Proteomes" id="UP000008817">
    <property type="component" value="Chromosome"/>
</dbReference>
<dbReference type="GO" id="GO:0005886">
    <property type="term" value="C:plasma membrane"/>
    <property type="evidence" value="ECO:0007669"/>
    <property type="project" value="UniProtKB-SubCell"/>
</dbReference>
<dbReference type="HAMAP" id="MF_01514">
    <property type="entry name" value="UPF0314"/>
    <property type="match status" value="1"/>
</dbReference>
<dbReference type="InterPro" id="IPR019691">
    <property type="entry name" value="DUF2585"/>
</dbReference>
<dbReference type="NCBIfam" id="NF002099">
    <property type="entry name" value="PRK00944.1"/>
    <property type="match status" value="1"/>
</dbReference>
<dbReference type="Pfam" id="PF10755">
    <property type="entry name" value="DUF2585"/>
    <property type="match status" value="1"/>
</dbReference>
<protein>
    <recommendedName>
        <fullName evidence="1">UPF0314 protein RHECIAT_CH0004233</fullName>
    </recommendedName>
</protein>
<organism>
    <name type="scientific">Rhizobium etli (strain CIAT 652)</name>
    <dbReference type="NCBI Taxonomy" id="491916"/>
    <lineage>
        <taxon>Bacteria</taxon>
        <taxon>Pseudomonadati</taxon>
        <taxon>Pseudomonadota</taxon>
        <taxon>Alphaproteobacteria</taxon>
        <taxon>Hyphomicrobiales</taxon>
        <taxon>Rhizobiaceae</taxon>
        <taxon>Rhizobium/Agrobacterium group</taxon>
        <taxon>Rhizobium</taxon>
    </lineage>
</organism>
<gene>
    <name type="ordered locus">RHECIAT_CH0004233</name>
</gene>
<keyword id="KW-1003">Cell membrane</keyword>
<keyword id="KW-0472">Membrane</keyword>
<keyword id="KW-0812">Transmembrane</keyword>
<keyword id="KW-1133">Transmembrane helix</keyword>
<reference key="1">
    <citation type="journal article" date="2010" name="Appl. Environ. Microbiol.">
        <title>Conserved symbiotic plasmid DNA sequences in the multireplicon pangenomic structure of Rhizobium etli.</title>
        <authorList>
            <person name="Gonzalez V."/>
            <person name="Acosta J.L."/>
            <person name="Santamaria R.I."/>
            <person name="Bustos P."/>
            <person name="Fernandez J.L."/>
            <person name="Hernandez Gonzalez I.L."/>
            <person name="Diaz R."/>
            <person name="Flores M."/>
            <person name="Palacios R."/>
            <person name="Mora J."/>
            <person name="Davila G."/>
        </authorList>
    </citation>
    <scope>NUCLEOTIDE SEQUENCE [LARGE SCALE GENOMIC DNA]</scope>
    <source>
        <strain>CIAT 652</strain>
    </source>
</reference>
<feature type="chain" id="PRO_1000198412" description="UPF0314 protein RHECIAT_CH0004233">
    <location>
        <begin position="1"/>
        <end position="195"/>
    </location>
</feature>
<feature type="transmembrane region" description="Helical" evidence="1">
    <location>
        <begin position="15"/>
        <end position="35"/>
    </location>
</feature>
<feature type="transmembrane region" description="Helical" evidence="1">
    <location>
        <begin position="64"/>
        <end position="84"/>
    </location>
</feature>
<feature type="transmembrane region" description="Helical" evidence="1">
    <location>
        <begin position="127"/>
        <end position="147"/>
    </location>
</feature>
<feature type="transmembrane region" description="Helical" evidence="1">
    <location>
        <begin position="150"/>
        <end position="170"/>
    </location>
</feature>
<sequence length="195" mass="21882">MSAADAEYRVRHQSFWFVACVAVLVAQIVTEYLMGRVPICACGYVKLWEGGVNTSGNSQHLSDWYTPSHIIHGFLFYGLGYLILRRKPLAARLLLALVIESGWELLENSPLIIDRYRTATIALDYYGDSILNSAMDTVFMCVGFFFASRAPVALTVAIAIFFEIFTGYVIRDNLTLNVLMLIWPVEAIKVWQGGV</sequence>
<evidence type="ECO:0000255" key="1">
    <source>
        <dbReference type="HAMAP-Rule" id="MF_01514"/>
    </source>
</evidence>
<proteinExistence type="inferred from homology"/>
<accession>B3PR08</accession>
<comment type="subcellular location">
    <subcellularLocation>
        <location evidence="1">Cell membrane</location>
        <topology evidence="1">Multi-pass membrane protein</topology>
    </subcellularLocation>
</comment>
<comment type="similarity">
    <text evidence="1">Belongs to the UPF0314 family.</text>
</comment>